<evidence type="ECO:0000255" key="1">
    <source>
        <dbReference type="HAMAP-Rule" id="MF_00719"/>
    </source>
</evidence>
<comment type="function">
    <text evidence="1">Joins adenosylcobinamide-GDP and alpha-ribazole to generate adenosylcobalamin (Ado-cobalamin). Also synthesizes adenosylcobalamin 5'-phosphate from adenosylcobinamide-GDP and alpha-ribazole 5'-phosphate.</text>
</comment>
<comment type="catalytic activity">
    <reaction evidence="1">
        <text>alpha-ribazole + adenosylcob(III)inamide-GDP = adenosylcob(III)alamin + GMP + H(+)</text>
        <dbReference type="Rhea" id="RHEA:16049"/>
        <dbReference type="ChEBI" id="CHEBI:10329"/>
        <dbReference type="ChEBI" id="CHEBI:15378"/>
        <dbReference type="ChEBI" id="CHEBI:18408"/>
        <dbReference type="ChEBI" id="CHEBI:58115"/>
        <dbReference type="ChEBI" id="CHEBI:60487"/>
        <dbReference type="EC" id="2.7.8.26"/>
    </reaction>
</comment>
<comment type="catalytic activity">
    <reaction evidence="1">
        <text>alpha-ribazole 5'-phosphate + adenosylcob(III)inamide-GDP = adenosylcob(III)alamin 5'-phosphate + GMP + H(+)</text>
        <dbReference type="Rhea" id="RHEA:23560"/>
        <dbReference type="ChEBI" id="CHEBI:15378"/>
        <dbReference type="ChEBI" id="CHEBI:57918"/>
        <dbReference type="ChEBI" id="CHEBI:58115"/>
        <dbReference type="ChEBI" id="CHEBI:60487"/>
        <dbReference type="ChEBI" id="CHEBI:60493"/>
        <dbReference type="EC" id="2.7.8.26"/>
    </reaction>
</comment>
<comment type="cofactor">
    <cofactor evidence="1">
        <name>Mg(2+)</name>
        <dbReference type="ChEBI" id="CHEBI:18420"/>
    </cofactor>
</comment>
<comment type="pathway">
    <text evidence="1">Cofactor biosynthesis; adenosylcobalamin biosynthesis; adenosylcobalamin from cob(II)yrinate a,c-diamide: step 7/7.</text>
</comment>
<comment type="subcellular location">
    <subcellularLocation>
        <location evidence="1">Cell membrane</location>
        <topology evidence="1">Multi-pass membrane protein</topology>
    </subcellularLocation>
</comment>
<comment type="similarity">
    <text evidence="1">Belongs to the CobS family.</text>
</comment>
<reference key="1">
    <citation type="submission" date="2006-12" db="EMBL/GenBank/DDBJ databases">
        <title>Complete sequence of Mycobacterium vanbaalenii PYR-1.</title>
        <authorList>
            <consortium name="US DOE Joint Genome Institute"/>
            <person name="Copeland A."/>
            <person name="Lucas S."/>
            <person name="Lapidus A."/>
            <person name="Barry K."/>
            <person name="Detter J.C."/>
            <person name="Glavina del Rio T."/>
            <person name="Hammon N."/>
            <person name="Israni S."/>
            <person name="Dalin E."/>
            <person name="Tice H."/>
            <person name="Pitluck S."/>
            <person name="Singan V."/>
            <person name="Schmutz J."/>
            <person name="Larimer F."/>
            <person name="Land M."/>
            <person name="Hauser L."/>
            <person name="Kyrpides N."/>
            <person name="Anderson I.J."/>
            <person name="Miller C."/>
            <person name="Richardson P."/>
        </authorList>
    </citation>
    <scope>NUCLEOTIDE SEQUENCE [LARGE SCALE GENOMIC DNA]</scope>
    <source>
        <strain>DSM 7251 / JCM 13017 / BCRC 16820 / KCTC 9966 / NRRL B-24157 / PYR-1</strain>
    </source>
</reference>
<organism>
    <name type="scientific">Mycolicibacterium vanbaalenii (strain DSM 7251 / JCM 13017 / BCRC 16820 / KCTC 9966 / NRRL B-24157 / PYR-1)</name>
    <name type="common">Mycobacterium vanbaalenii</name>
    <dbReference type="NCBI Taxonomy" id="350058"/>
    <lineage>
        <taxon>Bacteria</taxon>
        <taxon>Bacillati</taxon>
        <taxon>Actinomycetota</taxon>
        <taxon>Actinomycetes</taxon>
        <taxon>Mycobacteriales</taxon>
        <taxon>Mycobacteriaceae</taxon>
        <taxon>Mycolicibacterium</taxon>
    </lineage>
</organism>
<gene>
    <name evidence="1" type="primary">cobS</name>
    <name type="ordered locus">Mvan_3572</name>
</gene>
<name>COBS_MYCVP</name>
<feature type="chain" id="PRO_1000045785" description="Adenosylcobinamide-GDP ribazoletransferase">
    <location>
        <begin position="1"/>
        <end position="243"/>
    </location>
</feature>
<feature type="transmembrane region" description="Helical" evidence="1">
    <location>
        <begin position="29"/>
        <end position="49"/>
    </location>
</feature>
<feature type="transmembrane region" description="Helical" evidence="1">
    <location>
        <begin position="53"/>
        <end position="73"/>
    </location>
</feature>
<feature type="transmembrane region" description="Helical" evidence="1">
    <location>
        <begin position="119"/>
        <end position="139"/>
    </location>
</feature>
<feature type="transmembrane region" description="Helical" evidence="1">
    <location>
        <begin position="170"/>
        <end position="190"/>
    </location>
</feature>
<feature type="transmembrane region" description="Helical" evidence="1">
    <location>
        <begin position="194"/>
        <end position="214"/>
    </location>
</feature>
<feature type="transmembrane region" description="Helical" evidence="1">
    <location>
        <begin position="222"/>
        <end position="242"/>
    </location>
</feature>
<keyword id="KW-1003">Cell membrane</keyword>
<keyword id="KW-0169">Cobalamin biosynthesis</keyword>
<keyword id="KW-0460">Magnesium</keyword>
<keyword id="KW-0472">Membrane</keyword>
<keyword id="KW-0808">Transferase</keyword>
<keyword id="KW-0812">Transmembrane</keyword>
<keyword id="KW-1133">Transmembrane helix</keyword>
<proteinExistence type="inferred from homology"/>
<sequence>MISSLTGAFAFATVLPTPTRATAMVGRGVLTALPVAGAALGVLAAGVLWAGSWAFGDGSALAGVLTVAVLLLATRGLHIDGLSDTVDALGCYGPPERALAVMRDGTAGPFGVAAVAATLLVQSLAFAQSGWAAVFIAVVAGRVAVVAACRRGVPAAAGSTLGALVSGTQPRWVAAGWTVAVAAAAVPVCARPWQGPLVVALALACSAGLVAHCVRRFGGITGDVLGAALEVTTTIAAVGLAVR</sequence>
<protein>
    <recommendedName>
        <fullName evidence="1">Adenosylcobinamide-GDP ribazoletransferase</fullName>
        <ecNumber evidence="1">2.7.8.26</ecNumber>
    </recommendedName>
    <alternativeName>
        <fullName evidence="1">Cobalamin synthase</fullName>
    </alternativeName>
    <alternativeName>
        <fullName evidence="1">Cobalamin-5'-phosphate synthase</fullName>
    </alternativeName>
</protein>
<dbReference type="EC" id="2.7.8.26" evidence="1"/>
<dbReference type="EMBL" id="CP000511">
    <property type="protein sequence ID" value="ABM14366.1"/>
    <property type="molecule type" value="Genomic_DNA"/>
</dbReference>
<dbReference type="RefSeq" id="WP_011780769.1">
    <property type="nucleotide sequence ID" value="NC_008726.1"/>
</dbReference>
<dbReference type="STRING" id="350058.Mvan_3572"/>
<dbReference type="KEGG" id="mva:Mvan_3572"/>
<dbReference type="eggNOG" id="COG0368">
    <property type="taxonomic scope" value="Bacteria"/>
</dbReference>
<dbReference type="HOGENOM" id="CLU_057426_0_2_11"/>
<dbReference type="UniPathway" id="UPA00148">
    <property type="reaction ID" value="UER00238"/>
</dbReference>
<dbReference type="Proteomes" id="UP000009159">
    <property type="component" value="Chromosome"/>
</dbReference>
<dbReference type="GO" id="GO:0005886">
    <property type="term" value="C:plasma membrane"/>
    <property type="evidence" value="ECO:0007669"/>
    <property type="project" value="UniProtKB-SubCell"/>
</dbReference>
<dbReference type="GO" id="GO:0051073">
    <property type="term" value="F:adenosylcobinamide-GDP ribazoletransferase activity"/>
    <property type="evidence" value="ECO:0007669"/>
    <property type="project" value="UniProtKB-UniRule"/>
</dbReference>
<dbReference type="GO" id="GO:0008818">
    <property type="term" value="F:cobalamin 5'-phosphate synthase activity"/>
    <property type="evidence" value="ECO:0007669"/>
    <property type="project" value="UniProtKB-UniRule"/>
</dbReference>
<dbReference type="GO" id="GO:0009236">
    <property type="term" value="P:cobalamin biosynthetic process"/>
    <property type="evidence" value="ECO:0007669"/>
    <property type="project" value="UniProtKB-UniRule"/>
</dbReference>
<dbReference type="HAMAP" id="MF_00719">
    <property type="entry name" value="CobS"/>
    <property type="match status" value="1"/>
</dbReference>
<dbReference type="InterPro" id="IPR003805">
    <property type="entry name" value="CobS"/>
</dbReference>
<dbReference type="NCBIfam" id="NF001279">
    <property type="entry name" value="PRK00235.2-1"/>
    <property type="match status" value="1"/>
</dbReference>
<dbReference type="PANTHER" id="PTHR34148">
    <property type="entry name" value="ADENOSYLCOBINAMIDE-GDP RIBAZOLETRANSFERASE"/>
    <property type="match status" value="1"/>
</dbReference>
<dbReference type="PANTHER" id="PTHR34148:SF1">
    <property type="entry name" value="ADENOSYLCOBINAMIDE-GDP RIBAZOLETRANSFERASE"/>
    <property type="match status" value="1"/>
</dbReference>
<dbReference type="Pfam" id="PF02654">
    <property type="entry name" value="CobS"/>
    <property type="match status" value="1"/>
</dbReference>
<accession>A1TB16</accession>